<feature type="chain" id="PRO_0000131450" description="Large ribosomal subunit protein uL18">
    <location>
        <begin position="1"/>
        <end position="271"/>
    </location>
</feature>
<feature type="region of interest" description="Disordered" evidence="2">
    <location>
        <begin position="245"/>
        <end position="271"/>
    </location>
</feature>
<feature type="compositionally biased region" description="Basic and acidic residues" evidence="2">
    <location>
        <begin position="245"/>
        <end position="264"/>
    </location>
</feature>
<accession>O22608</accession>
<name>RL5_DUNSA</name>
<reference key="1">
    <citation type="submission" date="1997-10" db="EMBL/GenBank/DDBJ databases">
        <title>A cDNA encodes a protein sequence homologous to the eukaryotic ribosomal 5S RNA-binding protein from Dunaliella salina.</title>
        <authorList>
            <person name="Ko J.H."/>
            <person name="Lee S.H."/>
        </authorList>
    </citation>
    <scope>NUCLEOTIDE SEQUENCE [MRNA]</scope>
</reference>
<protein>
    <recommendedName>
        <fullName evidence="3">Large ribosomal subunit protein uL18</fullName>
    </recommendedName>
    <alternativeName>
        <fullName>60S ribosomal protein L5</fullName>
    </alternativeName>
</protein>
<keyword id="KW-0963">Cytoplasm</keyword>
<keyword id="KW-0539">Nucleus</keyword>
<keyword id="KW-0687">Ribonucleoprotein</keyword>
<keyword id="KW-0689">Ribosomal protein</keyword>
<keyword id="KW-0694">RNA-binding</keyword>
<keyword id="KW-0699">rRNA-binding</keyword>
<dbReference type="EMBL" id="AF028833">
    <property type="protein sequence ID" value="AAB84056.1"/>
    <property type="molecule type" value="mRNA"/>
</dbReference>
<dbReference type="PIR" id="T08009">
    <property type="entry name" value="T08009"/>
</dbReference>
<dbReference type="SMR" id="O22608"/>
<dbReference type="GO" id="GO:0022625">
    <property type="term" value="C:cytosolic large ribosomal subunit"/>
    <property type="evidence" value="ECO:0007669"/>
    <property type="project" value="TreeGrafter"/>
</dbReference>
<dbReference type="GO" id="GO:0005634">
    <property type="term" value="C:nucleus"/>
    <property type="evidence" value="ECO:0007669"/>
    <property type="project" value="UniProtKB-SubCell"/>
</dbReference>
<dbReference type="GO" id="GO:0008097">
    <property type="term" value="F:5S rRNA binding"/>
    <property type="evidence" value="ECO:0007669"/>
    <property type="project" value="InterPro"/>
</dbReference>
<dbReference type="GO" id="GO:0003735">
    <property type="term" value="F:structural constituent of ribosome"/>
    <property type="evidence" value="ECO:0007669"/>
    <property type="project" value="InterPro"/>
</dbReference>
<dbReference type="GO" id="GO:0000027">
    <property type="term" value="P:ribosomal large subunit assembly"/>
    <property type="evidence" value="ECO:0007669"/>
    <property type="project" value="TreeGrafter"/>
</dbReference>
<dbReference type="GO" id="GO:0006412">
    <property type="term" value="P:translation"/>
    <property type="evidence" value="ECO:0007669"/>
    <property type="project" value="InterPro"/>
</dbReference>
<dbReference type="CDD" id="cd00432">
    <property type="entry name" value="Ribosomal_L18_L5e"/>
    <property type="match status" value="1"/>
</dbReference>
<dbReference type="FunFam" id="3.30.420.100:FF:000002">
    <property type="entry name" value="60S ribosomal protein L5"/>
    <property type="match status" value="1"/>
</dbReference>
<dbReference type="Gene3D" id="3.30.420.100">
    <property type="match status" value="1"/>
</dbReference>
<dbReference type="HAMAP" id="MF_01337_A">
    <property type="entry name" value="Ribosomal_uL18_A"/>
    <property type="match status" value="1"/>
</dbReference>
<dbReference type="InterPro" id="IPR005485">
    <property type="entry name" value="Rbsml_uL18_euk"/>
</dbReference>
<dbReference type="InterPro" id="IPR025607">
    <property type="entry name" value="Ribosomal_uL18_C_euk"/>
</dbReference>
<dbReference type="PANTHER" id="PTHR23410:SF12">
    <property type="entry name" value="LARGE RIBOSOMAL SUBUNIT PROTEIN UL18"/>
    <property type="match status" value="1"/>
</dbReference>
<dbReference type="PANTHER" id="PTHR23410">
    <property type="entry name" value="RIBOSOMAL PROTEIN L5-RELATED"/>
    <property type="match status" value="1"/>
</dbReference>
<dbReference type="Pfam" id="PF14204">
    <property type="entry name" value="Ribosomal_L18_c"/>
    <property type="match status" value="1"/>
</dbReference>
<dbReference type="Pfam" id="PF17144">
    <property type="entry name" value="Ribosomal_L5e"/>
    <property type="match status" value="1"/>
</dbReference>
<dbReference type="PRINTS" id="PR00058">
    <property type="entry name" value="RIBOSOMALL5"/>
</dbReference>
<dbReference type="SUPFAM" id="SSF53137">
    <property type="entry name" value="Translational machinery components"/>
    <property type="match status" value="1"/>
</dbReference>
<gene>
    <name type="primary">RPL5</name>
    <name type="synonym">DSRP1</name>
</gene>
<sequence>MGYVKVVKTSPYFSRYQVKYRRRRQGKTDYRARLRLVRQDKNKYNTHKYRLVVRFSNKNVTCQIVYSTIQGDVVMAAAYSKELPNYGLKVGLTNYSAAYCVGLLVARRILTKLNLADTYKGQEEPDGEDYNVEPVEDGPKPFYCLLDTGLKRTSTGSKVFAAMKGALDGGLDIPHNEKRFVGYADKKLDTEVLQKYIYGGHVAEYQETMQEEEPEKYQAHFSSYVENEIEPDGIEDMYKEVHAKIRENPCPPKKERTKPADAKRWSPQAHL</sequence>
<comment type="function">
    <text evidence="1">Component of the ribosome, a large ribonucleoprotein complex responsible for the synthesis of proteins in the cell. The small ribosomal subunit (SSU) binds messenger RNAs (mRNAs) and translates the encoded message by selecting cognate aminoacyl-transfer RNA (tRNA) molecules. The large subunit (LSU) contains the ribosomal catalytic site termed the peptidyl transferase center (PTC), which catalyzes the formation of peptide bonds, thereby polymerizing the amino acids delivered by tRNAs into a polypeptide chain. The nascent polypeptides leave the ribosome through a tunnel in the LSU and interact with protein factors that function in enzymatic processing, targeting, and the membrane insertion of nascent chains at the exit of the ribosomal tunnel.</text>
</comment>
<comment type="subunit">
    <text evidence="1">Component of the large ribosomal subunit (LSU).</text>
</comment>
<comment type="subcellular location">
    <subcellularLocation>
        <location evidence="1">Cytoplasm</location>
    </subcellularLocation>
    <subcellularLocation>
        <location evidence="1">Nucleus</location>
    </subcellularLocation>
</comment>
<comment type="similarity">
    <text evidence="3">Belongs to the universal ribosomal protein uL18 family.</text>
</comment>
<organism>
    <name type="scientific">Dunaliella salina</name>
    <name type="common">Green alga</name>
    <name type="synonym">Protococcus salinus</name>
    <dbReference type="NCBI Taxonomy" id="3046"/>
    <lineage>
        <taxon>Eukaryota</taxon>
        <taxon>Viridiplantae</taxon>
        <taxon>Chlorophyta</taxon>
        <taxon>core chlorophytes</taxon>
        <taxon>Chlorophyceae</taxon>
        <taxon>CS clade</taxon>
        <taxon>Chlamydomonadales</taxon>
        <taxon>Dunaliellaceae</taxon>
        <taxon>Dunaliella</taxon>
    </lineage>
</organism>
<proteinExistence type="evidence at transcript level"/>
<evidence type="ECO:0000250" key="1">
    <source>
        <dbReference type="UniProtKB" id="P26321"/>
    </source>
</evidence>
<evidence type="ECO:0000256" key="2">
    <source>
        <dbReference type="SAM" id="MobiDB-lite"/>
    </source>
</evidence>
<evidence type="ECO:0000305" key="3"/>